<evidence type="ECO:0000250" key="1">
    <source>
        <dbReference type="UniProtKB" id="Q99MT2"/>
    </source>
</evidence>
<evidence type="ECO:0000255" key="2"/>
<evidence type="ECO:0000256" key="3">
    <source>
        <dbReference type="SAM" id="MobiDB-lite"/>
    </source>
</evidence>
<evidence type="ECO:0000269" key="4">
    <source>
    </source>
</evidence>
<evidence type="ECO:0000269" key="5">
    <source>
    </source>
</evidence>
<evidence type="ECO:0000269" key="6">
    <source>
    </source>
</evidence>
<evidence type="ECO:0000269" key="7">
    <source>
    </source>
</evidence>
<evidence type="ECO:0000269" key="8">
    <source>
    </source>
</evidence>
<evidence type="ECO:0000269" key="9">
    <source>
    </source>
</evidence>
<evidence type="ECO:0000269" key="10">
    <source>
    </source>
</evidence>
<evidence type="ECO:0000269" key="11">
    <source ref="3"/>
</evidence>
<evidence type="ECO:0000305" key="12"/>
<accession>O15457</accession>
<accession>Q5T4U6</accession>
<accession>Q8NEB3</accession>
<accession>Q9UNP8</accession>
<proteinExistence type="evidence at protein level"/>
<sequence>MLRPEISSTSPSAPAVSPSSGETRSPQGPRYNFGLQETPQSRPSVQVVSASTCPGTSGAAGDRSSSSSSLPCPAPNSRPAQGSYFGNKRAYAENTVASNFTFGASSSSARDTNYPQTLKTPLSTGNPQRSGYKSWTPQVGYSASSSSAISAHSPSVIVAVVEGRGLARGEIGMASIDLKNPQIILSQFADNTTYAKVITKLKILSPLEIIMSNTACAVGNSTKLFTLITENFKNVNFTTIQRKYFNETKGLEYIEQLCIAEFSTVLMEVQSKYYCLAAVAALLKYVEFIQNSVYAPKSLKICFQGSEQTAMIDSSSAQNLELLINNQDYRNNHTLFGVLNYTKTPGGSRRLRSNILEPLVDIETINMRLDCVQELLQDEELFFGLQSVISRFLDTEQLLSVLVQIPKQDTVNAAESKITNLIYLKHTLELVDPLKIAMKNCNTPLLRAYYGSLEDKRFGIILEKIKTVINDDARYMKGCLNMRTQKCYAVRSNINEFLDIARRTYTEIVDDIAGMISQLGEKYSLPLRTSFSSARGFFIQMTTDCIALPSDQLPSEFIKISKVKNSYSFTSADLIKMNERCQESLREIYHMTYMIVCKLLSEIYEHIHCLYKLSDTVSMLDMLLSFAHACTLSDYVRPEFTDTLAIKQGWHPILEKISAEKPIANNTYVTEGSNFLIITGPNMSGKSTYLKQIALCQIMAQIGSYVPAEYSSFRIAKQIFTRISTDDDIETNSSTFMKEMKEIAYILHNANDKSLILIDELGRGTNTEEGIGICYAVCEYLLSLKAFTLFATHFLELCHIDALYPNVENMHFEVQHVKNTSRNKEAILYTYKLSKGLTEEKNYGLKAAEVSSLPPSIVLDAKEITTQITRQILQNQRSTPEMERQRAVYHLATRLVQTARNSQLDPDSLRIYLSNLKKKYKEDFPRTEQVPEKTEE</sequence>
<name>MSH4_HUMAN</name>
<comment type="function">
    <text>Involved in meiotic recombination. Required for reciprocal recombination and proper segregation of homologous chromosomes at meiosis.</text>
</comment>
<comment type="subunit">
    <text>Heterooligomer of MSH4 and MSH5.</text>
</comment>
<comment type="interaction">
    <interactant intactId="EBI-6092777">
        <id>O15457</id>
    </interactant>
    <interactant intactId="EBI-711990">
        <id>O00303</id>
        <label>EIF3F</label>
    </interactant>
    <organismsDiffer>false</organismsDiffer>
    <experiments>6</experiments>
</comment>
<comment type="interaction">
    <interactant intactId="EBI-6092777">
        <id>O15457</id>
    </interactant>
    <interactant intactId="EBI-6092730">
        <id>O43196</id>
        <label>MSH5</label>
    </interactant>
    <organismsDiffer>false</organismsDiffer>
    <experiments>5</experiments>
</comment>
<comment type="subcellular location">
    <subcellularLocation>
        <location evidence="1">Chromosome</location>
    </subcellularLocation>
</comment>
<comment type="tissue specificity">
    <text evidence="6 10">Highly expressed in testis (PubMed:33437391, PubMed:9299235). Also expressed in the ovary (PubMed:9299235).</text>
</comment>
<comment type="disease" evidence="5 6 7 8 9">
    <disease id="DI-06451">
        <name>Spermatogenic failure 2</name>
        <acronym>SPGF2</acronym>
        <description>An autosomal recessive disorder characterized by male infertility due to non-obstructive azoospermia. Testicular histopathology reveals no round spermatids or spermatozoa in the seminiferous tubules of SPGF2 patients, consistent with meiotic arrest.</description>
        <dbReference type="MIM" id="108420"/>
    </disease>
    <text>The disease is caused by variants affecting the gene represented in this entry.</text>
</comment>
<comment type="disease" evidence="4 7 8">
    <disease id="DI-06466">
        <name>Premature ovarian failure 20</name>
        <acronym>POF20</acronym>
        <description>A form of premature ovarian failure, an ovarian disorder defined as the cessation of ovarian function under the age of 40 years. It is characterized by oligomenorrhea or amenorrhea, in the presence of elevated levels of serum gonadotropins and low estradiol. POF20 inheritance is autosomal recessive.</description>
        <dbReference type="MIM" id="619938"/>
    </disease>
    <text>The disease is caused by variants affecting the gene represented in this entry.</text>
</comment>
<comment type="similarity">
    <text evidence="12">Belongs to the DNA mismatch repair MutS family.</text>
</comment>
<protein>
    <recommendedName>
        <fullName>MutS protein homolog 4</fullName>
        <shortName>hMSH4</shortName>
    </recommendedName>
</protein>
<keyword id="KW-0067">ATP-binding</keyword>
<keyword id="KW-0158">Chromosome</keyword>
<keyword id="KW-0225">Disease variant</keyword>
<keyword id="KW-0238">DNA-binding</keyword>
<keyword id="KW-0469">Meiosis</keyword>
<keyword id="KW-0547">Nucleotide-binding</keyword>
<keyword id="KW-1066">Premature ovarian failure</keyword>
<keyword id="KW-1267">Proteomics identification</keyword>
<keyword id="KW-1185">Reference proteome</keyword>
<organism>
    <name type="scientific">Homo sapiens</name>
    <name type="common">Human</name>
    <dbReference type="NCBI Taxonomy" id="9606"/>
    <lineage>
        <taxon>Eukaryota</taxon>
        <taxon>Metazoa</taxon>
        <taxon>Chordata</taxon>
        <taxon>Craniata</taxon>
        <taxon>Vertebrata</taxon>
        <taxon>Euteleostomi</taxon>
        <taxon>Mammalia</taxon>
        <taxon>Eutheria</taxon>
        <taxon>Euarchontoglires</taxon>
        <taxon>Primates</taxon>
        <taxon>Haplorrhini</taxon>
        <taxon>Catarrhini</taxon>
        <taxon>Hominidae</taxon>
        <taxon>Homo</taxon>
    </lineage>
</organism>
<gene>
    <name type="primary">MSH4</name>
</gene>
<feature type="chain" id="PRO_0000115197" description="MutS protein homolog 4">
    <location>
        <begin position="1"/>
        <end position="936"/>
    </location>
</feature>
<feature type="region of interest" description="Disordered" evidence="3">
    <location>
        <begin position="1"/>
        <end position="83"/>
    </location>
</feature>
<feature type="region of interest" description="Disordered" evidence="3">
    <location>
        <begin position="103"/>
        <end position="133"/>
    </location>
</feature>
<feature type="compositionally biased region" description="Low complexity" evidence="3">
    <location>
        <begin position="7"/>
        <end position="20"/>
    </location>
</feature>
<feature type="compositionally biased region" description="Polar residues" evidence="3">
    <location>
        <begin position="35"/>
        <end position="55"/>
    </location>
</feature>
<feature type="binding site" evidence="2">
    <location>
        <begin position="680"/>
        <end position="687"/>
    </location>
    <ligand>
        <name>ATP</name>
        <dbReference type="ChEBI" id="CHEBI:30616"/>
    </ligand>
</feature>
<feature type="sequence variant" id="VAR_018831" description="In dbSNP:rs5745311." evidence="11">
    <original>A</original>
    <variation>V</variation>
    <location>
        <position position="60"/>
    </location>
</feature>
<feature type="sequence variant" id="VAR_087408" description="In SPGF2; uncertain significance; dbSNP:rs1649836857." evidence="9">
    <original>G</original>
    <variation>S</variation>
    <location>
        <position position="82"/>
    </location>
</feature>
<feature type="sequence variant" id="VAR_018832" description="In dbSNP:rs5745324." evidence="11">
    <original>A</original>
    <variation>T</variation>
    <location>
        <position position="90"/>
    </location>
</feature>
<feature type="sequence variant" id="VAR_018833" description="In dbSNP:rs5745325." evidence="11">
    <original>A</original>
    <variation>T</variation>
    <location>
        <position position="97"/>
    </location>
</feature>
<feature type="sequence variant" id="VAR_018834" description="In dbSNP:rs5745329." evidence="11">
    <original>E</original>
    <variation>K</variation>
    <location>
        <position position="162"/>
    </location>
</feature>
<feature type="sequence variant" id="VAR_087409" description="In SPGF2." evidence="8">
    <location>
        <begin position="485"/>
        <end position="936"/>
    </location>
</feature>
<feature type="sequence variant" id="VAR_087410" description="In SPGF2; severely decreased MSH4 transcript and protein levels in testicular tissue from a homozygous patient." evidence="6">
    <location>
        <begin position="518"/>
        <end position="936"/>
    </location>
</feature>
<feature type="sequence variant" id="VAR_018835" description="In dbSNP:rs5745459." evidence="11">
    <original>Y</original>
    <variation>C</variation>
    <location>
        <position position="589"/>
    </location>
</feature>
<feature type="sequence variant" id="VAR_087411" description="In SPGF2." evidence="5">
    <original>P</original>
    <variation>L</variation>
    <location>
        <position position="638"/>
    </location>
</feature>
<feature type="sequence variant" id="VAR_087412" description="In SPGF2." evidence="9">
    <location>
        <begin position="650"/>
        <end position="936"/>
    </location>
</feature>
<feature type="sequence variant" id="VAR_087413" description="In SPGF2 and POF20." evidence="8">
    <location>
        <begin position="733"/>
        <end position="936"/>
    </location>
</feature>
<feature type="sequence variant" id="VAR_087414" description="In SPGF2 and POF20; dbSNP:rs377712900." evidence="5 7">
    <original>S</original>
    <variation>L</variation>
    <location>
        <position position="754"/>
    </location>
</feature>
<feature type="sequence variant" id="VAR_018836" description="In dbSNP:rs5745549." evidence="11">
    <original>S</original>
    <variation>N</variation>
    <location>
        <position position="914"/>
    </location>
</feature>
<feature type="sequence conflict" description="In Ref. 1; AAB72039." evidence="12" ref="1">
    <original>SS</original>
    <variation>VV</variation>
    <location>
        <begin position="19"/>
        <end position="20"/>
    </location>
</feature>
<feature type="sequence conflict" description="In Ref. 6; AAH33030." evidence="12" ref="6">
    <original>I</original>
    <variation>V</variation>
    <location>
        <position position="365"/>
    </location>
</feature>
<feature type="sequence conflict" description="In Ref. 1; AAB72039." evidence="12" ref="1">
    <original>K</original>
    <variation>E</variation>
    <location>
        <position position="407"/>
    </location>
</feature>
<feature type="sequence conflict" description="In Ref. 1; AAB72039." evidence="12" ref="1">
    <original>F</original>
    <variation>L</variation>
    <location>
        <position position="531"/>
    </location>
</feature>
<feature type="sequence conflict" description="In Ref. 1; AAB72039." evidence="12" ref="1">
    <original>A</original>
    <variation>V</variation>
    <location>
        <position position="534"/>
    </location>
</feature>
<reference key="1">
    <citation type="journal article" date="1997" name="Genomics">
        <title>Cloning and expression analysis of a meiosis-specific MutS homolog: the human MSH4 gene.</title>
        <authorList>
            <person name="Paquis-Flucklinger V."/>
            <person name="Santucci-Darmanin S."/>
            <person name="Paul R."/>
            <person name="Saunieres A."/>
            <person name="Turc-Carel C."/>
            <person name="Desnuelle C."/>
        </authorList>
    </citation>
    <scope>NUCLEOTIDE SEQUENCE [MRNA]</scope>
    <scope>TISSUE SPECIFICITY</scope>
</reference>
<reference key="2">
    <citation type="submission" date="1998-11" db="EMBL/GenBank/DDBJ databases">
        <title>hMSH4 cDNA sequence, a variant.</title>
        <authorList>
            <person name="Her C."/>
            <person name="Doggett N."/>
        </authorList>
    </citation>
    <scope>NUCLEOTIDE SEQUENCE [MRNA]</scope>
</reference>
<reference key="3">
    <citation type="submission" date="2003-04" db="EMBL/GenBank/DDBJ databases">
        <authorList>
            <consortium name="NIEHS SNPs program"/>
        </authorList>
    </citation>
    <scope>NUCLEOTIDE SEQUENCE [GENOMIC DNA]</scope>
    <scope>VARIANTS VAL-60; THR-90; THR-97; LYS-162; CYS-589 AND ASN-914</scope>
</reference>
<reference key="4">
    <citation type="journal article" date="2006" name="Nature">
        <title>The DNA sequence and biological annotation of human chromosome 1.</title>
        <authorList>
            <person name="Gregory S.G."/>
            <person name="Barlow K.F."/>
            <person name="McLay K.E."/>
            <person name="Kaul R."/>
            <person name="Swarbreck D."/>
            <person name="Dunham A."/>
            <person name="Scott C.E."/>
            <person name="Howe K.L."/>
            <person name="Woodfine K."/>
            <person name="Spencer C.C.A."/>
            <person name="Jones M.C."/>
            <person name="Gillson C."/>
            <person name="Searle S."/>
            <person name="Zhou Y."/>
            <person name="Kokocinski F."/>
            <person name="McDonald L."/>
            <person name="Evans R."/>
            <person name="Phillips K."/>
            <person name="Atkinson A."/>
            <person name="Cooper R."/>
            <person name="Jones C."/>
            <person name="Hall R.E."/>
            <person name="Andrews T.D."/>
            <person name="Lloyd C."/>
            <person name="Ainscough R."/>
            <person name="Almeida J.P."/>
            <person name="Ambrose K.D."/>
            <person name="Anderson F."/>
            <person name="Andrew R.W."/>
            <person name="Ashwell R.I.S."/>
            <person name="Aubin K."/>
            <person name="Babbage A.K."/>
            <person name="Bagguley C.L."/>
            <person name="Bailey J."/>
            <person name="Beasley H."/>
            <person name="Bethel G."/>
            <person name="Bird C.P."/>
            <person name="Bray-Allen S."/>
            <person name="Brown J.Y."/>
            <person name="Brown A.J."/>
            <person name="Buckley D."/>
            <person name="Burton J."/>
            <person name="Bye J."/>
            <person name="Carder C."/>
            <person name="Chapman J.C."/>
            <person name="Clark S.Y."/>
            <person name="Clarke G."/>
            <person name="Clee C."/>
            <person name="Cobley V."/>
            <person name="Collier R.E."/>
            <person name="Corby N."/>
            <person name="Coville G.J."/>
            <person name="Davies J."/>
            <person name="Deadman R."/>
            <person name="Dunn M."/>
            <person name="Earthrowl M."/>
            <person name="Ellington A.G."/>
            <person name="Errington H."/>
            <person name="Frankish A."/>
            <person name="Frankland J."/>
            <person name="French L."/>
            <person name="Garner P."/>
            <person name="Garnett J."/>
            <person name="Gay L."/>
            <person name="Ghori M.R.J."/>
            <person name="Gibson R."/>
            <person name="Gilby L.M."/>
            <person name="Gillett W."/>
            <person name="Glithero R.J."/>
            <person name="Grafham D.V."/>
            <person name="Griffiths C."/>
            <person name="Griffiths-Jones S."/>
            <person name="Grocock R."/>
            <person name="Hammond S."/>
            <person name="Harrison E.S.I."/>
            <person name="Hart E."/>
            <person name="Haugen E."/>
            <person name="Heath P.D."/>
            <person name="Holmes S."/>
            <person name="Holt K."/>
            <person name="Howden P.J."/>
            <person name="Hunt A.R."/>
            <person name="Hunt S.E."/>
            <person name="Hunter G."/>
            <person name="Isherwood J."/>
            <person name="James R."/>
            <person name="Johnson C."/>
            <person name="Johnson D."/>
            <person name="Joy A."/>
            <person name="Kay M."/>
            <person name="Kershaw J.K."/>
            <person name="Kibukawa M."/>
            <person name="Kimberley A.M."/>
            <person name="King A."/>
            <person name="Knights A.J."/>
            <person name="Lad H."/>
            <person name="Laird G."/>
            <person name="Lawlor S."/>
            <person name="Leongamornlert D.A."/>
            <person name="Lloyd D.M."/>
            <person name="Loveland J."/>
            <person name="Lovell J."/>
            <person name="Lush M.J."/>
            <person name="Lyne R."/>
            <person name="Martin S."/>
            <person name="Mashreghi-Mohammadi M."/>
            <person name="Matthews L."/>
            <person name="Matthews N.S.W."/>
            <person name="McLaren S."/>
            <person name="Milne S."/>
            <person name="Mistry S."/>
            <person name="Moore M.J.F."/>
            <person name="Nickerson T."/>
            <person name="O'Dell C.N."/>
            <person name="Oliver K."/>
            <person name="Palmeiri A."/>
            <person name="Palmer S.A."/>
            <person name="Parker A."/>
            <person name="Patel D."/>
            <person name="Pearce A.V."/>
            <person name="Peck A.I."/>
            <person name="Pelan S."/>
            <person name="Phelps K."/>
            <person name="Phillimore B.J."/>
            <person name="Plumb R."/>
            <person name="Rajan J."/>
            <person name="Raymond C."/>
            <person name="Rouse G."/>
            <person name="Saenphimmachak C."/>
            <person name="Sehra H.K."/>
            <person name="Sheridan E."/>
            <person name="Shownkeen R."/>
            <person name="Sims S."/>
            <person name="Skuce C.D."/>
            <person name="Smith M."/>
            <person name="Steward C."/>
            <person name="Subramanian S."/>
            <person name="Sycamore N."/>
            <person name="Tracey A."/>
            <person name="Tromans A."/>
            <person name="Van Helmond Z."/>
            <person name="Wall M."/>
            <person name="Wallis J.M."/>
            <person name="White S."/>
            <person name="Whitehead S.L."/>
            <person name="Wilkinson J.E."/>
            <person name="Willey D.L."/>
            <person name="Williams H."/>
            <person name="Wilming L."/>
            <person name="Wray P.W."/>
            <person name="Wu Z."/>
            <person name="Coulson A."/>
            <person name="Vaudin M."/>
            <person name="Sulston J.E."/>
            <person name="Durbin R.M."/>
            <person name="Hubbard T."/>
            <person name="Wooster R."/>
            <person name="Dunham I."/>
            <person name="Carter N.P."/>
            <person name="McVean G."/>
            <person name="Ross M.T."/>
            <person name="Harrow J."/>
            <person name="Olson M.V."/>
            <person name="Beck S."/>
            <person name="Rogers J."/>
            <person name="Bentley D.R."/>
        </authorList>
    </citation>
    <scope>NUCLEOTIDE SEQUENCE [LARGE SCALE GENOMIC DNA]</scope>
</reference>
<reference key="5">
    <citation type="submission" date="2005-09" db="EMBL/GenBank/DDBJ databases">
        <authorList>
            <person name="Mural R.J."/>
            <person name="Istrail S."/>
            <person name="Sutton G.G."/>
            <person name="Florea L."/>
            <person name="Halpern A.L."/>
            <person name="Mobarry C.M."/>
            <person name="Lippert R."/>
            <person name="Walenz B."/>
            <person name="Shatkay H."/>
            <person name="Dew I."/>
            <person name="Miller J.R."/>
            <person name="Flanigan M.J."/>
            <person name="Edwards N.J."/>
            <person name="Bolanos R."/>
            <person name="Fasulo D."/>
            <person name="Halldorsson B.V."/>
            <person name="Hannenhalli S."/>
            <person name="Turner R."/>
            <person name="Yooseph S."/>
            <person name="Lu F."/>
            <person name="Nusskern D.R."/>
            <person name="Shue B.C."/>
            <person name="Zheng X.H."/>
            <person name="Zhong F."/>
            <person name="Delcher A.L."/>
            <person name="Huson D.H."/>
            <person name="Kravitz S.A."/>
            <person name="Mouchard L."/>
            <person name="Reinert K."/>
            <person name="Remington K.A."/>
            <person name="Clark A.G."/>
            <person name="Waterman M.S."/>
            <person name="Eichler E.E."/>
            <person name="Adams M.D."/>
            <person name="Hunkapiller M.W."/>
            <person name="Myers E.W."/>
            <person name="Venter J.C."/>
        </authorList>
    </citation>
    <scope>NUCLEOTIDE SEQUENCE [LARGE SCALE GENOMIC DNA]</scope>
</reference>
<reference key="6">
    <citation type="journal article" date="2004" name="Genome Res.">
        <title>The status, quality, and expansion of the NIH full-length cDNA project: the Mammalian Gene Collection (MGC).</title>
        <authorList>
            <consortium name="The MGC Project Team"/>
        </authorList>
    </citation>
    <scope>NUCLEOTIDE SEQUENCE [LARGE SCALE MRNA]</scope>
    <source>
        <tissue>Testis</tissue>
    </source>
</reference>
<reference key="7">
    <citation type="journal article" date="2008" name="Proc. Natl. Acad. Sci. U.S.A.">
        <title>A quantitative atlas of mitotic phosphorylation.</title>
        <authorList>
            <person name="Dephoure N."/>
            <person name="Zhou C."/>
            <person name="Villen J."/>
            <person name="Beausoleil S.A."/>
            <person name="Bakalarski C.E."/>
            <person name="Elledge S.J."/>
            <person name="Gygi S.P."/>
        </authorList>
    </citation>
    <scope>IDENTIFICATION BY MASS SPECTROMETRY [LARGE SCALE ANALYSIS]</scope>
    <source>
        <tissue>Cervix carcinoma</tissue>
    </source>
</reference>
<reference key="8">
    <citation type="journal article" date="2017" name="Hum. Mol. Genet.">
        <title>A homozygous donor splice-site mutation in the meiotic gene MSH4 causes primary ovarian insufficiency.</title>
        <authorList>
            <person name="Carlosama C."/>
            <person name="Elzaiat M."/>
            <person name="Patino L.C."/>
            <person name="Mateus H.E."/>
            <person name="Veitia R.A."/>
            <person name="Laissue P."/>
        </authorList>
    </citation>
    <scope>INVOLVEMENT IN POF20</scope>
</reference>
<reference key="9">
    <citation type="journal article" date="2020" name="Am. J. Transl. Res.">
        <title>A novel homozygous mutation in the meiotic gene MSH4 leading to male infertility due to non-obstructive azoospermia.</title>
        <authorList>
            <person name="Tang D."/>
            <person name="Xu C."/>
            <person name="Geng H."/>
            <person name="Gao Y."/>
            <person name="Cheng H."/>
            <person name="Ni X."/>
            <person name="He X."/>
            <person name="Cao Y."/>
        </authorList>
    </citation>
    <scope>VARIANT SPGF2 518-GLN--GLU-936 DEL</scope>
    <scope>CHARACTERIZATION OF VARIANT SPGF2 518-GLN--GLU-936 DEL</scope>
    <scope>INVOLVEMENT IN SPGF2</scope>
    <scope>TISSUE SPECIFICITY</scope>
</reference>
<reference key="10">
    <citation type="journal article" date="2020" name="Genet. Med.">
        <title>Genetic dissection of spermatogenic arrest through exome analysis: clinical implications for the management of azoospermic men.</title>
        <authorList>
            <person name="Krausz C."/>
            <person name="Riera-Escamilla A."/>
            <person name="Moreno-Mendoza D."/>
            <person name="Holleman K."/>
            <person name="Cioppi F."/>
            <person name="Algaba F."/>
            <person name="Pybus M."/>
            <person name="Friedrich C."/>
            <person name="Wyrwoll M.J."/>
            <person name="Casamonti E."/>
            <person name="Pietroforte S."/>
            <person name="Nagirnaja L."/>
            <person name="Lopes A.M."/>
            <person name="Kliesch S."/>
            <person name="Pilatz A."/>
            <person name="Carrell D.T."/>
            <person name="Conrad D.F."/>
            <person name="Ars E."/>
            <person name="Ruiz-Castane E."/>
            <person name="Aston K.I."/>
            <person name="Baarends W.M."/>
            <person name="Tuettelmann F."/>
        </authorList>
    </citation>
    <scope>VARIANTS SPGF2 LEU-638 AND LEU-754</scope>
</reference>
<reference key="11">
    <citation type="journal article" date="2021" name="Hum. Reprod.">
        <title>Rare missense variant in MSH4 associated with primary gonadal failure in both 46, XX and 46, XY individuals.</title>
        <authorList>
            <person name="Akbari A."/>
            <person name="Padidar K."/>
            <person name="Salehi N."/>
            <person name="Mashayekhi M."/>
            <person name="Almadani N."/>
            <person name="Sadighi Gilani M.A."/>
            <person name="Bashambou A."/>
            <person name="McElreavey K."/>
            <person name="Totonchi M."/>
        </authorList>
    </citation>
    <scope>VARIANT SPGF2 LEU-754</scope>
    <scope>VARIANT POF20 LEU-754</scope>
</reference>
<reference key="12">
    <citation type="journal article" date="2021" name="Hum. Reprod.">
        <title>Bi-allelic variants in DNA mismatch repair proteins MutS Homolog MSH4 and MSH5 cause infertility in both sexes.</title>
        <authorList>
            <person name="Wyrwoll M.J."/>
            <person name="van Walree E.S."/>
            <person name="Hamer G."/>
            <person name="Rotte N."/>
            <person name="Motazacker M.M."/>
            <person name="Meijers-Heijboer H."/>
            <person name="Alders M."/>
            <person name="Meissner A."/>
            <person name="Kaminsky E."/>
            <person name="Woeste M."/>
            <person name="Krallmann C."/>
            <person name="Kliesch S."/>
            <person name="Hunt T.J."/>
            <person name="Clark A.T."/>
            <person name="Silber S."/>
            <person name="Stallmeyer B."/>
            <person name="Friedrich C."/>
            <person name="van Pelt A.M.M."/>
            <person name="Mathijssen I.B."/>
            <person name="Tuettelmann F."/>
        </authorList>
    </citation>
    <scope>VARIANTS SPGF2 485-GLN--GLU-936 DEL AND 733-SER--GLU-936 DEL</scope>
    <scope>VARIANT POF20 733-SER--GLU-936 DEL</scope>
</reference>
<reference key="13">
    <citation type="journal article" date="2022" name="Reprod. Biol. Endocrinol.">
        <title>Novel bi-allelic MSH4 variants causes meiotic arrest and non-obstructive azoospermia.</title>
        <authorList>
            <person name="Li P."/>
            <person name="Ji Z."/>
            <person name="Zhi E."/>
            <person name="Zhang Y."/>
            <person name="Han S."/>
            <person name="Zhao L."/>
            <person name="Tian R."/>
            <person name="Chen H."/>
            <person name="Huang Y."/>
            <person name="Zhang J."/>
            <person name="Chen H."/>
            <person name="Zhao F."/>
            <person name="Zhou Z."/>
            <person name="Li Z."/>
            <person name="Yao C."/>
        </authorList>
    </citation>
    <scope>VARIANTS SPGF2 SER-82 AND 650-TRP--GLU-936 DEL</scope>
</reference>
<dbReference type="EMBL" id="U89293">
    <property type="protein sequence ID" value="AAB72039.1"/>
    <property type="molecule type" value="mRNA"/>
</dbReference>
<dbReference type="EMBL" id="AF104243">
    <property type="protein sequence ID" value="AAD17920.1"/>
    <property type="molecule type" value="mRNA"/>
</dbReference>
<dbReference type="EMBL" id="AY268350">
    <property type="protein sequence ID" value="AAP03427.1"/>
    <property type="molecule type" value="Genomic_DNA"/>
</dbReference>
<dbReference type="EMBL" id="AL357314">
    <property type="status" value="NOT_ANNOTATED_CDS"/>
    <property type="molecule type" value="Genomic_DNA"/>
</dbReference>
<dbReference type="EMBL" id="AL445464">
    <property type="status" value="NOT_ANNOTATED_CDS"/>
    <property type="molecule type" value="Genomic_DNA"/>
</dbReference>
<dbReference type="EMBL" id="CH471059">
    <property type="protein sequence ID" value="EAX06392.1"/>
    <property type="molecule type" value="Genomic_DNA"/>
</dbReference>
<dbReference type="EMBL" id="BC033030">
    <property type="protein sequence ID" value="AAH33030.1"/>
    <property type="molecule type" value="mRNA"/>
</dbReference>
<dbReference type="CCDS" id="CCDS670.1"/>
<dbReference type="RefSeq" id="NP_002431.2">
    <property type="nucleotide sequence ID" value="NM_002440.3"/>
</dbReference>
<dbReference type="SMR" id="O15457"/>
<dbReference type="BioGRID" id="110575">
    <property type="interactions" value="17"/>
</dbReference>
<dbReference type="ComplexPortal" id="CPX-9881">
    <property type="entry name" value="MutSgamma meiotic recombination complex"/>
</dbReference>
<dbReference type="CORUM" id="O15457"/>
<dbReference type="FunCoup" id="O15457">
    <property type="interactions" value="860"/>
</dbReference>
<dbReference type="IntAct" id="O15457">
    <property type="interactions" value="5"/>
</dbReference>
<dbReference type="MINT" id="O15457"/>
<dbReference type="STRING" id="9606.ENSP00000263187"/>
<dbReference type="GlyGen" id="O15457">
    <property type="glycosylation" value="3 sites, 2 N-linked glycans (2 sites), 1 O-linked glycan (1 site)"/>
</dbReference>
<dbReference type="iPTMnet" id="O15457"/>
<dbReference type="PhosphoSitePlus" id="O15457"/>
<dbReference type="BioMuta" id="MSH4"/>
<dbReference type="MassIVE" id="O15457"/>
<dbReference type="PaxDb" id="9606-ENSP00000263187"/>
<dbReference type="PeptideAtlas" id="O15457"/>
<dbReference type="ProteomicsDB" id="48679"/>
<dbReference type="Antibodypedia" id="33475">
    <property type="antibodies" value="146 antibodies from 20 providers"/>
</dbReference>
<dbReference type="DNASU" id="4438"/>
<dbReference type="Ensembl" id="ENST00000263187.4">
    <property type="protein sequence ID" value="ENSP00000263187.3"/>
    <property type="gene ID" value="ENSG00000057468.7"/>
</dbReference>
<dbReference type="GeneID" id="4438"/>
<dbReference type="KEGG" id="hsa:4438"/>
<dbReference type="MANE-Select" id="ENST00000263187.4">
    <property type="protein sequence ID" value="ENSP00000263187.3"/>
    <property type="RefSeq nucleotide sequence ID" value="NM_002440.4"/>
    <property type="RefSeq protein sequence ID" value="NP_002431.2"/>
</dbReference>
<dbReference type="UCSC" id="uc001dhd.3">
    <property type="organism name" value="human"/>
</dbReference>
<dbReference type="AGR" id="HGNC:7327"/>
<dbReference type="CTD" id="4438"/>
<dbReference type="DisGeNET" id="4438"/>
<dbReference type="GeneCards" id="MSH4"/>
<dbReference type="HGNC" id="HGNC:7327">
    <property type="gene designation" value="MSH4"/>
</dbReference>
<dbReference type="HPA" id="ENSG00000057468">
    <property type="expression patterns" value="Tissue enhanced (epididymis, testis)"/>
</dbReference>
<dbReference type="MalaCards" id="MSH4"/>
<dbReference type="MIM" id="108420">
    <property type="type" value="phenotype"/>
</dbReference>
<dbReference type="MIM" id="602105">
    <property type="type" value="gene"/>
</dbReference>
<dbReference type="MIM" id="619938">
    <property type="type" value="phenotype"/>
</dbReference>
<dbReference type="neXtProt" id="NX_O15457"/>
<dbReference type="OpenTargets" id="ENSG00000057468"/>
<dbReference type="Orphanet" id="243">
    <property type="disease" value="46,XX gonadal dysgenesis"/>
</dbReference>
<dbReference type="PharmGKB" id="PA31135"/>
<dbReference type="VEuPathDB" id="HostDB:ENSG00000057468"/>
<dbReference type="eggNOG" id="KOG0220">
    <property type="taxonomic scope" value="Eukaryota"/>
</dbReference>
<dbReference type="GeneTree" id="ENSGT00550000074897"/>
<dbReference type="HOGENOM" id="CLU_002472_7_2_1"/>
<dbReference type="InParanoid" id="O15457"/>
<dbReference type="OMA" id="KMTMLYK"/>
<dbReference type="OrthoDB" id="276261at2759"/>
<dbReference type="PAN-GO" id="O15457">
    <property type="GO annotations" value="3 GO annotations based on evolutionary models"/>
</dbReference>
<dbReference type="PhylomeDB" id="O15457"/>
<dbReference type="TreeFam" id="TF300572"/>
<dbReference type="PathwayCommons" id="O15457"/>
<dbReference type="Reactome" id="R-HSA-912446">
    <property type="pathway name" value="Meiotic recombination"/>
</dbReference>
<dbReference type="SignaLink" id="O15457"/>
<dbReference type="BioGRID-ORCS" id="4438">
    <property type="hits" value="12 hits in 1152 CRISPR screens"/>
</dbReference>
<dbReference type="ChiTaRS" id="MSH4">
    <property type="organism name" value="human"/>
</dbReference>
<dbReference type="GeneWiki" id="MSH4"/>
<dbReference type="GenomeRNAi" id="4438"/>
<dbReference type="Pharos" id="O15457">
    <property type="development level" value="Tbio"/>
</dbReference>
<dbReference type="PRO" id="PR:O15457"/>
<dbReference type="Proteomes" id="UP000005640">
    <property type="component" value="Chromosome 1"/>
</dbReference>
<dbReference type="RNAct" id="O15457">
    <property type="molecule type" value="protein"/>
</dbReference>
<dbReference type="Bgee" id="ENSG00000057468">
    <property type="expression patterns" value="Expressed in male germ line stem cell (sensu Vertebrata) in testis and 92 other cell types or tissues"/>
</dbReference>
<dbReference type="GO" id="GO:0005694">
    <property type="term" value="C:chromosome"/>
    <property type="evidence" value="ECO:0000250"/>
    <property type="project" value="UniProtKB"/>
</dbReference>
<dbReference type="GO" id="GO:0005634">
    <property type="term" value="C:nucleus"/>
    <property type="evidence" value="ECO:0000318"/>
    <property type="project" value="GO_Central"/>
</dbReference>
<dbReference type="GO" id="GO:0005713">
    <property type="term" value="C:recombination nodule"/>
    <property type="evidence" value="ECO:0007669"/>
    <property type="project" value="Ensembl"/>
</dbReference>
<dbReference type="GO" id="GO:0000795">
    <property type="term" value="C:synaptonemal complex"/>
    <property type="evidence" value="ECO:0007669"/>
    <property type="project" value="Ensembl"/>
</dbReference>
<dbReference type="GO" id="GO:0005524">
    <property type="term" value="F:ATP binding"/>
    <property type="evidence" value="ECO:0007669"/>
    <property type="project" value="UniProtKB-KW"/>
</dbReference>
<dbReference type="GO" id="GO:0140664">
    <property type="term" value="F:ATP-dependent DNA damage sensor activity"/>
    <property type="evidence" value="ECO:0007669"/>
    <property type="project" value="InterPro"/>
</dbReference>
<dbReference type="GO" id="GO:0003677">
    <property type="term" value="F:DNA binding"/>
    <property type="evidence" value="ECO:0000304"/>
    <property type="project" value="ProtInc"/>
</dbReference>
<dbReference type="GO" id="GO:0003690">
    <property type="term" value="F:double-stranded DNA binding"/>
    <property type="evidence" value="ECO:0000318"/>
    <property type="project" value="GO_Central"/>
</dbReference>
<dbReference type="GO" id="GO:0030983">
    <property type="term" value="F:mismatched DNA binding"/>
    <property type="evidence" value="ECO:0007669"/>
    <property type="project" value="InterPro"/>
</dbReference>
<dbReference type="GO" id="GO:0007292">
    <property type="term" value="P:female gamete generation"/>
    <property type="evidence" value="ECO:0007669"/>
    <property type="project" value="Ensembl"/>
</dbReference>
<dbReference type="GO" id="GO:0007129">
    <property type="term" value="P:homologous chromosome pairing at meiosis"/>
    <property type="evidence" value="ECO:0007669"/>
    <property type="project" value="Ensembl"/>
</dbReference>
<dbReference type="GO" id="GO:0006298">
    <property type="term" value="P:mismatch repair"/>
    <property type="evidence" value="ECO:0007669"/>
    <property type="project" value="InterPro"/>
</dbReference>
<dbReference type="GO" id="GO:0001541">
    <property type="term" value="P:ovarian follicle development"/>
    <property type="evidence" value="ECO:0007669"/>
    <property type="project" value="Ensembl"/>
</dbReference>
<dbReference type="GO" id="GO:0007131">
    <property type="term" value="P:reciprocal meiotic recombination"/>
    <property type="evidence" value="ECO:0000318"/>
    <property type="project" value="GO_Central"/>
</dbReference>
<dbReference type="GO" id="GO:0007283">
    <property type="term" value="P:spermatogenesis"/>
    <property type="evidence" value="ECO:0007669"/>
    <property type="project" value="Ensembl"/>
</dbReference>
<dbReference type="CDD" id="cd03243">
    <property type="entry name" value="ABC_MutS_homologs"/>
    <property type="match status" value="1"/>
</dbReference>
<dbReference type="FunFam" id="3.40.50.300:FF:000870">
    <property type="entry name" value="MutS protein homolog 4"/>
    <property type="match status" value="1"/>
</dbReference>
<dbReference type="FunFam" id="1.10.1420.10:FF:000013">
    <property type="entry name" value="mutS protein homolog 4"/>
    <property type="match status" value="1"/>
</dbReference>
<dbReference type="FunFam" id="1.10.1420.10:FF:000016">
    <property type="entry name" value="mutS protein homolog 4"/>
    <property type="match status" value="1"/>
</dbReference>
<dbReference type="FunFam" id="3.30.420.110:FF:000003">
    <property type="entry name" value="mutS protein homolog 4"/>
    <property type="match status" value="1"/>
</dbReference>
<dbReference type="Gene3D" id="1.10.1420.10">
    <property type="match status" value="2"/>
</dbReference>
<dbReference type="Gene3D" id="3.30.420.110">
    <property type="entry name" value="MutS, connector domain"/>
    <property type="match status" value="1"/>
</dbReference>
<dbReference type="Gene3D" id="3.40.50.300">
    <property type="entry name" value="P-loop containing nucleotide triphosphate hydrolases"/>
    <property type="match status" value="1"/>
</dbReference>
<dbReference type="InterPro" id="IPR000432">
    <property type="entry name" value="DNA_mismatch_repair_MutS_C"/>
</dbReference>
<dbReference type="InterPro" id="IPR007861">
    <property type="entry name" value="DNA_mismatch_repair_MutS_clamp"/>
</dbReference>
<dbReference type="InterPro" id="IPR007696">
    <property type="entry name" value="DNA_mismatch_repair_MutS_core"/>
</dbReference>
<dbReference type="InterPro" id="IPR036187">
    <property type="entry name" value="DNA_mismatch_repair_MutS_sf"/>
</dbReference>
<dbReference type="InterPro" id="IPR007860">
    <property type="entry name" value="DNA_mmatch_repair_MutS_con_dom"/>
</dbReference>
<dbReference type="InterPro" id="IPR045076">
    <property type="entry name" value="MutS"/>
</dbReference>
<dbReference type="InterPro" id="IPR036678">
    <property type="entry name" value="MutS_con_dom_sf"/>
</dbReference>
<dbReference type="InterPro" id="IPR027417">
    <property type="entry name" value="P-loop_NTPase"/>
</dbReference>
<dbReference type="PANTHER" id="PTHR11361">
    <property type="entry name" value="DNA MISMATCH REPAIR PROTEIN MUTS FAMILY MEMBER"/>
    <property type="match status" value="1"/>
</dbReference>
<dbReference type="PANTHER" id="PTHR11361:SF21">
    <property type="entry name" value="MUTS PROTEIN HOMOLOG 4"/>
    <property type="match status" value="1"/>
</dbReference>
<dbReference type="Pfam" id="PF05188">
    <property type="entry name" value="MutS_II"/>
    <property type="match status" value="1"/>
</dbReference>
<dbReference type="Pfam" id="PF05192">
    <property type="entry name" value="MutS_III"/>
    <property type="match status" value="1"/>
</dbReference>
<dbReference type="Pfam" id="PF05190">
    <property type="entry name" value="MutS_IV"/>
    <property type="match status" value="1"/>
</dbReference>
<dbReference type="Pfam" id="PF00488">
    <property type="entry name" value="MutS_V"/>
    <property type="match status" value="1"/>
</dbReference>
<dbReference type="SMART" id="SM00534">
    <property type="entry name" value="MUTSac"/>
    <property type="match status" value="1"/>
</dbReference>
<dbReference type="SMART" id="SM00533">
    <property type="entry name" value="MUTSd"/>
    <property type="match status" value="1"/>
</dbReference>
<dbReference type="SUPFAM" id="SSF48334">
    <property type="entry name" value="DNA repair protein MutS, domain III"/>
    <property type="match status" value="1"/>
</dbReference>
<dbReference type="SUPFAM" id="SSF52540">
    <property type="entry name" value="P-loop containing nucleoside triphosphate hydrolases"/>
    <property type="match status" value="1"/>
</dbReference>
<dbReference type="PROSITE" id="PS00486">
    <property type="entry name" value="DNA_MISMATCH_REPAIR_2"/>
    <property type="match status" value="1"/>
</dbReference>